<organism>
    <name type="scientific">Mus musculus</name>
    <name type="common">Mouse</name>
    <dbReference type="NCBI Taxonomy" id="10090"/>
    <lineage>
        <taxon>Eukaryota</taxon>
        <taxon>Metazoa</taxon>
        <taxon>Chordata</taxon>
        <taxon>Craniata</taxon>
        <taxon>Vertebrata</taxon>
        <taxon>Euteleostomi</taxon>
        <taxon>Mammalia</taxon>
        <taxon>Eutheria</taxon>
        <taxon>Euarchontoglires</taxon>
        <taxon>Glires</taxon>
        <taxon>Rodentia</taxon>
        <taxon>Myomorpha</taxon>
        <taxon>Muroidea</taxon>
        <taxon>Muridae</taxon>
        <taxon>Murinae</taxon>
        <taxon>Mus</taxon>
        <taxon>Mus</taxon>
    </lineage>
</organism>
<accession>Q8BVA4</accession>
<name>LMOD1_MOUSE</name>
<comment type="function">
    <text evidence="2 6">Required for proper contractility of visceral smooth muscle cells (PubMed:28292896). Mediates nucleation of actin filaments (By similarity).</text>
</comment>
<comment type="subcellular location">
    <subcellularLocation>
        <location evidence="1">Cytoplasm</location>
        <location evidence="1">Myofibril</location>
        <location evidence="1">Sarcomere</location>
    </subcellularLocation>
    <subcellularLocation>
        <location evidence="1">Cytoplasm</location>
        <location evidence="1">Cytoskeleton</location>
    </subcellularLocation>
    <text evidence="1">Colocalizes with actin filaments in sarcomeres.</text>
</comment>
<comment type="tissue specificity">
    <text evidence="5">Detected in aorta, urinary bladder and uterus (at protein level). Detected in smooth muscle cells. Detected in aorta, bladder, colon, intestine, stomach and uterus.</text>
</comment>
<comment type="similarity">
    <text evidence="7">Belongs to the tropomodulin family.</text>
</comment>
<feature type="chain" id="PRO_0000354070" description="Leiomodin-1">
    <location>
        <begin position="1"/>
        <end position="595"/>
    </location>
</feature>
<feature type="repeat" description="1">
    <location>
        <begin position="165"/>
        <end position="179"/>
    </location>
</feature>
<feature type="repeat" description="2">
    <location>
        <begin position="180"/>
        <end position="195"/>
    </location>
</feature>
<feature type="repeat" description="3">
    <location>
        <begin position="196"/>
        <end position="211"/>
    </location>
</feature>
<feature type="repeat" description="4">
    <location>
        <begin position="212"/>
        <end position="226"/>
    </location>
</feature>
<feature type="repeat" description="5">
    <location>
        <begin position="227"/>
        <end position="240"/>
    </location>
</feature>
<feature type="repeat" description="6">
    <location>
        <begin position="242"/>
        <end position="255"/>
    </location>
</feature>
<feature type="repeat" description="7">
    <location>
        <begin position="256"/>
        <end position="271"/>
    </location>
</feature>
<feature type="repeat" description="8">
    <location>
        <begin position="272"/>
        <end position="288"/>
    </location>
</feature>
<feature type="domain" description="WH2" evidence="3">
    <location>
        <begin position="569"/>
        <end position="588"/>
    </location>
</feature>
<feature type="region of interest" description="Disordered" evidence="4">
    <location>
        <begin position="1"/>
        <end position="69"/>
    </location>
</feature>
<feature type="region of interest" description="Disordered" evidence="4">
    <location>
        <begin position="81"/>
        <end position="322"/>
    </location>
</feature>
<feature type="region of interest" description="8 X approximate tandem repeats">
    <location>
        <begin position="165"/>
        <end position="288"/>
    </location>
</feature>
<feature type="region of interest" description="Disordered" evidence="4">
    <location>
        <begin position="467"/>
        <end position="568"/>
    </location>
</feature>
<feature type="region of interest" description="5 X 4 AA approximate tandem repeats">
    <location>
        <begin position="503"/>
        <end position="522"/>
    </location>
</feature>
<feature type="compositionally biased region" description="Acidic residues" evidence="4">
    <location>
        <begin position="27"/>
        <end position="40"/>
    </location>
</feature>
<feature type="compositionally biased region" description="Basic and acidic residues" evidence="4">
    <location>
        <begin position="81"/>
        <end position="110"/>
    </location>
</feature>
<feature type="compositionally biased region" description="Basic and acidic residues" evidence="4">
    <location>
        <begin position="117"/>
        <end position="127"/>
    </location>
</feature>
<feature type="compositionally biased region" description="Basic and acidic residues" evidence="4">
    <location>
        <begin position="134"/>
        <end position="192"/>
    </location>
</feature>
<feature type="compositionally biased region" description="Basic and acidic residues" evidence="4">
    <location>
        <begin position="200"/>
        <end position="223"/>
    </location>
</feature>
<feature type="compositionally biased region" description="Basic and acidic residues" evidence="4">
    <location>
        <begin position="230"/>
        <end position="249"/>
    </location>
</feature>
<feature type="compositionally biased region" description="Basic and acidic residues" evidence="4">
    <location>
        <begin position="257"/>
        <end position="287"/>
    </location>
</feature>
<feature type="compositionally biased region" description="Basic and acidic residues" evidence="4">
    <location>
        <begin position="467"/>
        <end position="476"/>
    </location>
</feature>
<feature type="compositionally biased region" description="Basic and acidic residues" evidence="4">
    <location>
        <begin position="484"/>
        <end position="493"/>
    </location>
</feature>
<feature type="compositionally biased region" description="Pro residues" evidence="4">
    <location>
        <begin position="505"/>
        <end position="517"/>
    </location>
</feature>
<feature type="compositionally biased region" description="Pro residues" evidence="4">
    <location>
        <begin position="527"/>
        <end position="538"/>
    </location>
</feature>
<feature type="modified residue" description="Phosphoserine" evidence="1">
    <location>
        <position position="12"/>
    </location>
</feature>
<feature type="modified residue" description="Phosphoserine" evidence="1">
    <location>
        <position position="85"/>
    </location>
</feature>
<feature type="modified residue" description="Phosphoserine" evidence="1">
    <location>
        <position position="135"/>
    </location>
</feature>
<feature type="modified residue" description="Phosphoserine" evidence="1">
    <location>
        <position position="550"/>
    </location>
</feature>
<proteinExistence type="evidence at protein level"/>
<reference key="1">
    <citation type="journal article" date="2005" name="Science">
        <title>The transcriptional landscape of the mammalian genome.</title>
        <authorList>
            <person name="Carninci P."/>
            <person name="Kasukawa T."/>
            <person name="Katayama S."/>
            <person name="Gough J."/>
            <person name="Frith M.C."/>
            <person name="Maeda N."/>
            <person name="Oyama R."/>
            <person name="Ravasi T."/>
            <person name="Lenhard B."/>
            <person name="Wells C."/>
            <person name="Kodzius R."/>
            <person name="Shimokawa K."/>
            <person name="Bajic V.B."/>
            <person name="Brenner S.E."/>
            <person name="Batalov S."/>
            <person name="Forrest A.R."/>
            <person name="Zavolan M."/>
            <person name="Davis M.J."/>
            <person name="Wilming L.G."/>
            <person name="Aidinis V."/>
            <person name="Allen J.E."/>
            <person name="Ambesi-Impiombato A."/>
            <person name="Apweiler R."/>
            <person name="Aturaliya R.N."/>
            <person name="Bailey T.L."/>
            <person name="Bansal M."/>
            <person name="Baxter L."/>
            <person name="Beisel K.W."/>
            <person name="Bersano T."/>
            <person name="Bono H."/>
            <person name="Chalk A.M."/>
            <person name="Chiu K.P."/>
            <person name="Choudhary V."/>
            <person name="Christoffels A."/>
            <person name="Clutterbuck D.R."/>
            <person name="Crowe M.L."/>
            <person name="Dalla E."/>
            <person name="Dalrymple B.P."/>
            <person name="de Bono B."/>
            <person name="Della Gatta G."/>
            <person name="di Bernardo D."/>
            <person name="Down T."/>
            <person name="Engstrom P."/>
            <person name="Fagiolini M."/>
            <person name="Faulkner G."/>
            <person name="Fletcher C.F."/>
            <person name="Fukushima T."/>
            <person name="Furuno M."/>
            <person name="Futaki S."/>
            <person name="Gariboldi M."/>
            <person name="Georgii-Hemming P."/>
            <person name="Gingeras T.R."/>
            <person name="Gojobori T."/>
            <person name="Green R.E."/>
            <person name="Gustincich S."/>
            <person name="Harbers M."/>
            <person name="Hayashi Y."/>
            <person name="Hensch T.K."/>
            <person name="Hirokawa N."/>
            <person name="Hill D."/>
            <person name="Huminiecki L."/>
            <person name="Iacono M."/>
            <person name="Ikeo K."/>
            <person name="Iwama A."/>
            <person name="Ishikawa T."/>
            <person name="Jakt M."/>
            <person name="Kanapin A."/>
            <person name="Katoh M."/>
            <person name="Kawasawa Y."/>
            <person name="Kelso J."/>
            <person name="Kitamura H."/>
            <person name="Kitano H."/>
            <person name="Kollias G."/>
            <person name="Krishnan S.P."/>
            <person name="Kruger A."/>
            <person name="Kummerfeld S.K."/>
            <person name="Kurochkin I.V."/>
            <person name="Lareau L.F."/>
            <person name="Lazarevic D."/>
            <person name="Lipovich L."/>
            <person name="Liu J."/>
            <person name="Liuni S."/>
            <person name="McWilliam S."/>
            <person name="Madan Babu M."/>
            <person name="Madera M."/>
            <person name="Marchionni L."/>
            <person name="Matsuda H."/>
            <person name="Matsuzawa S."/>
            <person name="Miki H."/>
            <person name="Mignone F."/>
            <person name="Miyake S."/>
            <person name="Morris K."/>
            <person name="Mottagui-Tabar S."/>
            <person name="Mulder N."/>
            <person name="Nakano N."/>
            <person name="Nakauchi H."/>
            <person name="Ng P."/>
            <person name="Nilsson R."/>
            <person name="Nishiguchi S."/>
            <person name="Nishikawa S."/>
            <person name="Nori F."/>
            <person name="Ohara O."/>
            <person name="Okazaki Y."/>
            <person name="Orlando V."/>
            <person name="Pang K.C."/>
            <person name="Pavan W.J."/>
            <person name="Pavesi G."/>
            <person name="Pesole G."/>
            <person name="Petrovsky N."/>
            <person name="Piazza S."/>
            <person name="Reed J."/>
            <person name="Reid J.F."/>
            <person name="Ring B.Z."/>
            <person name="Ringwald M."/>
            <person name="Rost B."/>
            <person name="Ruan Y."/>
            <person name="Salzberg S.L."/>
            <person name="Sandelin A."/>
            <person name="Schneider C."/>
            <person name="Schoenbach C."/>
            <person name="Sekiguchi K."/>
            <person name="Semple C.A."/>
            <person name="Seno S."/>
            <person name="Sessa L."/>
            <person name="Sheng Y."/>
            <person name="Shibata Y."/>
            <person name="Shimada H."/>
            <person name="Shimada K."/>
            <person name="Silva D."/>
            <person name="Sinclair B."/>
            <person name="Sperling S."/>
            <person name="Stupka E."/>
            <person name="Sugiura K."/>
            <person name="Sultana R."/>
            <person name="Takenaka Y."/>
            <person name="Taki K."/>
            <person name="Tammoja K."/>
            <person name="Tan S.L."/>
            <person name="Tang S."/>
            <person name="Taylor M.S."/>
            <person name="Tegner J."/>
            <person name="Teichmann S.A."/>
            <person name="Ueda H.R."/>
            <person name="van Nimwegen E."/>
            <person name="Verardo R."/>
            <person name="Wei C.L."/>
            <person name="Yagi K."/>
            <person name="Yamanishi H."/>
            <person name="Zabarovsky E."/>
            <person name="Zhu S."/>
            <person name="Zimmer A."/>
            <person name="Hide W."/>
            <person name="Bult C."/>
            <person name="Grimmond S.M."/>
            <person name="Teasdale R.D."/>
            <person name="Liu E.T."/>
            <person name="Brusic V."/>
            <person name="Quackenbush J."/>
            <person name="Wahlestedt C."/>
            <person name="Mattick J.S."/>
            <person name="Hume D.A."/>
            <person name="Kai C."/>
            <person name="Sasaki D."/>
            <person name="Tomaru Y."/>
            <person name="Fukuda S."/>
            <person name="Kanamori-Katayama M."/>
            <person name="Suzuki M."/>
            <person name="Aoki J."/>
            <person name="Arakawa T."/>
            <person name="Iida J."/>
            <person name="Imamura K."/>
            <person name="Itoh M."/>
            <person name="Kato T."/>
            <person name="Kawaji H."/>
            <person name="Kawagashira N."/>
            <person name="Kawashima T."/>
            <person name="Kojima M."/>
            <person name="Kondo S."/>
            <person name="Konno H."/>
            <person name="Nakano K."/>
            <person name="Ninomiya N."/>
            <person name="Nishio T."/>
            <person name="Okada M."/>
            <person name="Plessy C."/>
            <person name="Shibata K."/>
            <person name="Shiraki T."/>
            <person name="Suzuki S."/>
            <person name="Tagami M."/>
            <person name="Waki K."/>
            <person name="Watahiki A."/>
            <person name="Okamura-Oho Y."/>
            <person name="Suzuki H."/>
            <person name="Kawai J."/>
            <person name="Hayashizaki Y."/>
        </authorList>
    </citation>
    <scope>NUCLEOTIDE SEQUENCE [LARGE SCALE MRNA]</scope>
    <source>
        <strain>C57BL/6J</strain>
        <tissue>Urinary bladder</tissue>
    </source>
</reference>
<reference key="2">
    <citation type="journal article" date="2012" name="J. Biol. Chem.">
        <title>Leiomodin 1, a new serum response factor-dependent target gene expressed preferentially in differentiated smooth muscle cells.</title>
        <authorList>
            <person name="Nanda V."/>
            <person name="Miano J.M."/>
        </authorList>
    </citation>
    <scope>TISSUE SPECIFICITY</scope>
</reference>
<reference key="3">
    <citation type="journal article" date="2017" name="Proc. Natl. Acad. Sci. U.S.A.">
        <title>Loss of LMOD1 impairs smooth muscle cytocontractility and causes megacystis microcolon intestinal hypoperistalsis syndrome in humans and mice.</title>
        <authorList>
            <person name="Halim D."/>
            <person name="Wilson M.P."/>
            <person name="Oliver D."/>
            <person name="Brosens E."/>
            <person name="Verheij J.B."/>
            <person name="Han Y."/>
            <person name="Nanda V."/>
            <person name="Lyu Q."/>
            <person name="Doukas M."/>
            <person name="Stoop H."/>
            <person name="Brouwer R.W."/>
            <person name="van Ijcken W.F."/>
            <person name="Slivano O.J."/>
            <person name="Burns A.J."/>
            <person name="Christie C.K."/>
            <person name="de Mesy Bentley K.L."/>
            <person name="Brooks A.S."/>
            <person name="Tibboel D."/>
            <person name="Xu S."/>
            <person name="Jin Z.G."/>
            <person name="Djuwantono T."/>
            <person name="Yan W."/>
            <person name="Alves M.M."/>
            <person name="Hofstra R.M."/>
            <person name="Miano J.M."/>
        </authorList>
    </citation>
    <scope>FUNCTION</scope>
</reference>
<sequence length="595" mass="66310">MSKVAKYRRQVSEDPDIDSLLSTLSPEEMEELEKELDVVDPDGSIPVGLRQRNQTDKQPSGSFNREAMLNFCEKESKKLIQREMSVDESKQVGRKTDAKNGEEKDSDASRKAPGPRQDSDLGKEPKKGVLKKSFSRDREEADGRGGEKPKEEKVIRGIDKGRVRAAVDRKESGKDGREERAAAARKEEEKTGSVKNAGLSRDKDKKKEEVKEPSKKEEVKLTAESRNTVGRREDGRLKESSKENKKPEDEGIGSGGRDWRKEDEKVKKEENQPDKEVREESKTKAPEKQAPSCPNKPSDGQARAEEEAAPSIFDEPLEKVKNNDPEMTEVNVNNSDCITNEILVRFTEALEFNTVVKVFALANTRADDHVAFAIAIMLKANKTITSLNLDSNHITGKGILAIFRALLQNNTLTELRFHNQRHICGVKTEMEIAKLLKENTTLLKLGYHFELAGPRMTVTNLLSRNMDKQRQKRLQEQKQAQEASGEKKDRLEVPKVGALAKGSPKPSPQPSPKPAPKNSPKKAGVPAAPPPPPPPLAPPLIMENLKNSLSPATQRKMGDKVLPAQEKNSRDQLLAAIRSSNLKQLKKVEVPKLLQ</sequence>
<dbReference type="EMBL" id="AK079173">
    <property type="protein sequence ID" value="BAC37567.1"/>
    <property type="molecule type" value="mRNA"/>
</dbReference>
<dbReference type="CCDS" id="CCDS35718.1"/>
<dbReference type="RefSeq" id="NP_444336.2">
    <property type="nucleotide sequence ID" value="NM_053106.2"/>
</dbReference>
<dbReference type="SMR" id="Q8BVA4"/>
<dbReference type="BioGRID" id="220239">
    <property type="interactions" value="1"/>
</dbReference>
<dbReference type="FunCoup" id="Q8BVA4">
    <property type="interactions" value="66"/>
</dbReference>
<dbReference type="STRING" id="10090.ENSMUSP00000061597"/>
<dbReference type="iPTMnet" id="Q8BVA4"/>
<dbReference type="PhosphoSitePlus" id="Q8BVA4"/>
<dbReference type="jPOST" id="Q8BVA4"/>
<dbReference type="PaxDb" id="10090-ENSMUSP00000061597"/>
<dbReference type="ProteomicsDB" id="286223"/>
<dbReference type="Pumba" id="Q8BVA4"/>
<dbReference type="DNASU" id="93689"/>
<dbReference type="GeneID" id="93689"/>
<dbReference type="KEGG" id="mmu:93689"/>
<dbReference type="AGR" id="MGI:2135671"/>
<dbReference type="CTD" id="25802"/>
<dbReference type="MGI" id="MGI:2135671">
    <property type="gene designation" value="Lmod1"/>
</dbReference>
<dbReference type="eggNOG" id="KOG3735">
    <property type="taxonomic scope" value="Eukaryota"/>
</dbReference>
<dbReference type="InParanoid" id="Q8BVA4"/>
<dbReference type="OrthoDB" id="2163268at2759"/>
<dbReference type="PhylomeDB" id="Q8BVA4"/>
<dbReference type="Reactome" id="R-MMU-445355">
    <property type="pathway name" value="Smooth Muscle Contraction"/>
</dbReference>
<dbReference type="BioGRID-ORCS" id="93689">
    <property type="hits" value="5 hits in 76 CRISPR screens"/>
</dbReference>
<dbReference type="ChiTaRS" id="Lmod1">
    <property type="organism name" value="mouse"/>
</dbReference>
<dbReference type="PRO" id="PR:Q8BVA4"/>
<dbReference type="Proteomes" id="UP000000589">
    <property type="component" value="Unplaced"/>
</dbReference>
<dbReference type="RNAct" id="Q8BVA4">
    <property type="molecule type" value="protein"/>
</dbReference>
<dbReference type="GO" id="GO:0005884">
    <property type="term" value="C:actin filament"/>
    <property type="evidence" value="ECO:0000250"/>
    <property type="project" value="UniProtKB"/>
</dbReference>
<dbReference type="GO" id="GO:0030016">
    <property type="term" value="C:myofibril"/>
    <property type="evidence" value="ECO:0000250"/>
    <property type="project" value="UniProtKB"/>
</dbReference>
<dbReference type="GO" id="GO:0030017">
    <property type="term" value="C:sarcomere"/>
    <property type="evidence" value="ECO:0000250"/>
    <property type="project" value="UniProtKB"/>
</dbReference>
<dbReference type="GO" id="GO:0003779">
    <property type="term" value="F:actin binding"/>
    <property type="evidence" value="ECO:0007669"/>
    <property type="project" value="InterPro"/>
</dbReference>
<dbReference type="GO" id="GO:0005523">
    <property type="term" value="F:tropomyosin binding"/>
    <property type="evidence" value="ECO:0007669"/>
    <property type="project" value="InterPro"/>
</dbReference>
<dbReference type="GO" id="GO:0045010">
    <property type="term" value="P:actin nucleation"/>
    <property type="evidence" value="ECO:0000250"/>
    <property type="project" value="UniProtKB"/>
</dbReference>
<dbReference type="GO" id="GO:0051694">
    <property type="term" value="P:pointed-end actin filament capping"/>
    <property type="evidence" value="ECO:0007669"/>
    <property type="project" value="InterPro"/>
</dbReference>
<dbReference type="GO" id="GO:0030838">
    <property type="term" value="P:positive regulation of actin filament polymerization"/>
    <property type="evidence" value="ECO:0000250"/>
    <property type="project" value="UniProtKB"/>
</dbReference>
<dbReference type="FunFam" id="3.80.10.10:FF:000083">
    <property type="entry name" value="Leiomodin 1"/>
    <property type="match status" value="1"/>
</dbReference>
<dbReference type="Gene3D" id="3.80.10.10">
    <property type="entry name" value="Ribonuclease Inhibitor"/>
    <property type="match status" value="1"/>
</dbReference>
<dbReference type="InterPro" id="IPR032675">
    <property type="entry name" value="LRR_dom_sf"/>
</dbReference>
<dbReference type="InterPro" id="IPR004934">
    <property type="entry name" value="TMOD"/>
</dbReference>
<dbReference type="InterPro" id="IPR003124">
    <property type="entry name" value="WH2_dom"/>
</dbReference>
<dbReference type="PANTHER" id="PTHR10901:SF5">
    <property type="entry name" value="LEIOMODIN-1"/>
    <property type="match status" value="1"/>
</dbReference>
<dbReference type="PANTHER" id="PTHR10901">
    <property type="entry name" value="TROPOMODULIN"/>
    <property type="match status" value="1"/>
</dbReference>
<dbReference type="Pfam" id="PF03250">
    <property type="entry name" value="Tropomodulin"/>
    <property type="match status" value="1"/>
</dbReference>
<dbReference type="Pfam" id="PF02205">
    <property type="entry name" value="WH2"/>
    <property type="match status" value="1"/>
</dbReference>
<dbReference type="SMART" id="SM00246">
    <property type="entry name" value="WH2"/>
    <property type="match status" value="1"/>
</dbReference>
<dbReference type="SUPFAM" id="SSF52047">
    <property type="entry name" value="RNI-like"/>
    <property type="match status" value="1"/>
</dbReference>
<dbReference type="PROSITE" id="PS51082">
    <property type="entry name" value="WH2"/>
    <property type="match status" value="1"/>
</dbReference>
<gene>
    <name type="primary">Lmod1</name>
</gene>
<evidence type="ECO:0000250" key="1">
    <source>
        <dbReference type="UniProtKB" id="A0A0G2K0D3"/>
    </source>
</evidence>
<evidence type="ECO:0000250" key="2">
    <source>
        <dbReference type="UniProtKB" id="P29536"/>
    </source>
</evidence>
<evidence type="ECO:0000255" key="3">
    <source>
        <dbReference type="PROSITE-ProRule" id="PRU00406"/>
    </source>
</evidence>
<evidence type="ECO:0000256" key="4">
    <source>
        <dbReference type="SAM" id="MobiDB-lite"/>
    </source>
</evidence>
<evidence type="ECO:0000269" key="5">
    <source>
    </source>
</evidence>
<evidence type="ECO:0000269" key="6">
    <source>
    </source>
</evidence>
<evidence type="ECO:0000305" key="7"/>
<keyword id="KW-0963">Cytoplasm</keyword>
<keyword id="KW-0206">Cytoskeleton</keyword>
<keyword id="KW-0597">Phosphoprotein</keyword>
<keyword id="KW-1185">Reference proteome</keyword>
<keyword id="KW-0677">Repeat</keyword>
<protein>
    <recommendedName>
        <fullName>Leiomodin-1</fullName>
    </recommendedName>
</protein>